<organism>
    <name type="scientific">Mimosa pudica</name>
    <name type="common">Sensitive plant</name>
    <dbReference type="NCBI Taxonomy" id="76306"/>
    <lineage>
        <taxon>Eukaryota</taxon>
        <taxon>Viridiplantae</taxon>
        <taxon>Streptophyta</taxon>
        <taxon>Embryophyta</taxon>
        <taxon>Tracheophyta</taxon>
        <taxon>Spermatophyta</taxon>
        <taxon>Magnoliopsida</taxon>
        <taxon>eudicotyledons</taxon>
        <taxon>Gunneridae</taxon>
        <taxon>Pentapetalae</taxon>
        <taxon>rosids</taxon>
        <taxon>fabids</taxon>
        <taxon>Fabales</taxon>
        <taxon>Fabaceae</taxon>
        <taxon>Caesalpinioideae</taxon>
        <taxon>mimosoid clade</taxon>
        <taxon>Mimoseae</taxon>
        <taxon>Mimosa</taxon>
    </lineage>
</organism>
<protein>
    <recommendedName>
        <fullName evidence="1">Maturase K</fullName>
    </recommendedName>
    <alternativeName>
        <fullName evidence="1">Intron maturase</fullName>
    </alternativeName>
</protein>
<reference key="1">
    <citation type="submission" date="2002-11" db="EMBL/GenBank/DDBJ databases">
        <title>The matK gene encoded by the Mimosa pudica chloroplast trnK intron.</title>
        <authorList>
            <person name="Yin W.-B."/>
            <person name="Hu J."/>
            <person name="Zhang Y."/>
            <person name="Zhang F.-Y."/>
            <person name="Hu Z.-M."/>
        </authorList>
    </citation>
    <scope>NUCLEOTIDE SEQUENCE [GENOMIC DNA]</scope>
</reference>
<gene>
    <name evidence="1" type="primary">matK</name>
</gene>
<geneLocation type="chloroplast"/>
<feature type="chain" id="PRO_0000143524" description="Maturase K">
    <location>
        <begin position="1"/>
        <end position="506"/>
    </location>
</feature>
<keyword id="KW-0150">Chloroplast</keyword>
<keyword id="KW-0507">mRNA processing</keyword>
<keyword id="KW-0934">Plastid</keyword>
<keyword id="KW-0694">RNA-binding</keyword>
<keyword id="KW-0819">tRNA processing</keyword>
<proteinExistence type="inferred from homology"/>
<evidence type="ECO:0000255" key="1">
    <source>
        <dbReference type="HAMAP-Rule" id="MF_01390"/>
    </source>
</evidence>
<dbReference type="EMBL" id="AY177668">
    <property type="protein sequence ID" value="AAO21370.1"/>
    <property type="molecule type" value="Genomic_DNA"/>
</dbReference>
<dbReference type="GO" id="GO:0009507">
    <property type="term" value="C:chloroplast"/>
    <property type="evidence" value="ECO:0007669"/>
    <property type="project" value="UniProtKB-SubCell"/>
</dbReference>
<dbReference type="GO" id="GO:0003723">
    <property type="term" value="F:RNA binding"/>
    <property type="evidence" value="ECO:0007669"/>
    <property type="project" value="UniProtKB-KW"/>
</dbReference>
<dbReference type="GO" id="GO:0006397">
    <property type="term" value="P:mRNA processing"/>
    <property type="evidence" value="ECO:0007669"/>
    <property type="project" value="UniProtKB-KW"/>
</dbReference>
<dbReference type="GO" id="GO:0008380">
    <property type="term" value="P:RNA splicing"/>
    <property type="evidence" value="ECO:0007669"/>
    <property type="project" value="UniProtKB-UniRule"/>
</dbReference>
<dbReference type="GO" id="GO:0008033">
    <property type="term" value="P:tRNA processing"/>
    <property type="evidence" value="ECO:0007669"/>
    <property type="project" value="UniProtKB-KW"/>
</dbReference>
<dbReference type="HAMAP" id="MF_01390">
    <property type="entry name" value="MatK"/>
    <property type="match status" value="1"/>
</dbReference>
<dbReference type="InterPro" id="IPR024937">
    <property type="entry name" value="Domain_X"/>
</dbReference>
<dbReference type="InterPro" id="IPR002866">
    <property type="entry name" value="Maturase_MatK"/>
</dbReference>
<dbReference type="InterPro" id="IPR024942">
    <property type="entry name" value="Maturase_MatK_N"/>
</dbReference>
<dbReference type="PANTHER" id="PTHR34811">
    <property type="entry name" value="MATURASE K"/>
    <property type="match status" value="1"/>
</dbReference>
<dbReference type="PANTHER" id="PTHR34811:SF1">
    <property type="entry name" value="MATURASE K"/>
    <property type="match status" value="1"/>
</dbReference>
<dbReference type="Pfam" id="PF01348">
    <property type="entry name" value="Intron_maturas2"/>
    <property type="match status" value="1"/>
</dbReference>
<dbReference type="Pfam" id="PF01824">
    <property type="entry name" value="MatK_N"/>
    <property type="match status" value="1"/>
</dbReference>
<name>MATK_MIMPU</name>
<comment type="function">
    <text evidence="1">Usually encoded in the trnK tRNA gene intron. Probably assists in splicing its own and other chloroplast group II introns.</text>
</comment>
<comment type="subcellular location">
    <subcellularLocation>
        <location>Plastid</location>
        <location>Chloroplast</location>
    </subcellularLocation>
</comment>
<comment type="similarity">
    <text evidence="1">Belongs to the intron maturase 2 family. MatK subfamily.</text>
</comment>
<sequence>MKEYQVYLERDRSRQQDFLYPLIFREYVYGLAYSHDFNRSTFVENVGYDNKYSLLIVKRLITRMYQQNHLIISANDSKKNPFLGYNKNFYSQIISEGFAIIVEIPFFLQFSSSLEAAEIVKSYKNLRSIHSIFPFLEDKFPYLNYVSDIRIPYPIHLEILVQILRYWVKDAPFFHLLRLFLYNFCNRNSFLTPKKSISTFSKSNPRLFLFLYNFYVCEYESIFLFLRKKSSHLRLKSFSVFFERIFFYAKREHLVEVFAKDFSSTLTFFKDPLIHYVRYQGKSILASKNAPLLMNKWKHYFIHLWECFFDVWSQPGTIHIKQLSEHSFYLLGYFSNVRLNRSVVRSQMVQNTFLIEIVSKKLDIIVPIIPIIRSLAKAKFCNVLGHPISKAVWADSSDFDIIDRFLRICRNISHYYNGSSKKKSLYRIKYILRLSCIKTLACKHKSTVRAFLKRSGSEELLEEFFTEEEEILSLIFPRASSTLQKLHGNRIWYLDILFSNDLVNHE</sequence>
<accession>Q85XY8</accession>